<organism>
    <name type="scientific">Citrus sinensis</name>
    <name type="common">Sweet orange</name>
    <name type="synonym">Citrus aurantium var. sinensis</name>
    <dbReference type="NCBI Taxonomy" id="2711"/>
    <lineage>
        <taxon>Eukaryota</taxon>
        <taxon>Viridiplantae</taxon>
        <taxon>Streptophyta</taxon>
        <taxon>Embryophyta</taxon>
        <taxon>Tracheophyta</taxon>
        <taxon>Spermatophyta</taxon>
        <taxon>Magnoliopsida</taxon>
        <taxon>eudicotyledons</taxon>
        <taxon>Gunneridae</taxon>
        <taxon>Pentapetalae</taxon>
        <taxon>rosids</taxon>
        <taxon>malvids</taxon>
        <taxon>Sapindales</taxon>
        <taxon>Rutaceae</taxon>
        <taxon>Aurantioideae</taxon>
        <taxon>Citrus</taxon>
    </lineage>
</organism>
<geneLocation type="chloroplast"/>
<accession>Q09MH3</accession>
<dbReference type="EC" id="7.1.1.-" evidence="1"/>
<dbReference type="EMBL" id="DQ864733">
    <property type="protein sequence ID" value="ABI49025.1"/>
    <property type="molecule type" value="Genomic_DNA"/>
</dbReference>
<dbReference type="RefSeq" id="YP_740480.1">
    <property type="nucleotide sequence ID" value="NC_008334.1"/>
</dbReference>
<dbReference type="SMR" id="Q09MH3"/>
<dbReference type="GeneID" id="4271207"/>
<dbReference type="KEGG" id="cit:4271207"/>
<dbReference type="OrthoDB" id="61263at71240"/>
<dbReference type="GO" id="GO:0009535">
    <property type="term" value="C:chloroplast thylakoid membrane"/>
    <property type="evidence" value="ECO:0007669"/>
    <property type="project" value="UniProtKB-SubCell"/>
</dbReference>
<dbReference type="GO" id="GO:0008137">
    <property type="term" value="F:NADH dehydrogenase (ubiquinone) activity"/>
    <property type="evidence" value="ECO:0007669"/>
    <property type="project" value="InterPro"/>
</dbReference>
<dbReference type="GO" id="GO:0048038">
    <property type="term" value="F:quinone binding"/>
    <property type="evidence" value="ECO:0007669"/>
    <property type="project" value="UniProtKB-KW"/>
</dbReference>
<dbReference type="GO" id="GO:0019684">
    <property type="term" value="P:photosynthesis, light reaction"/>
    <property type="evidence" value="ECO:0007669"/>
    <property type="project" value="UniProtKB-UniRule"/>
</dbReference>
<dbReference type="FunFam" id="1.20.58.1610:FF:000001">
    <property type="entry name" value="NAD(P)H-quinone oxidoreductase subunit 3, chloroplastic"/>
    <property type="match status" value="1"/>
</dbReference>
<dbReference type="Gene3D" id="1.20.58.1610">
    <property type="entry name" value="NADH:ubiquinone/plastoquinone oxidoreductase, chain 3"/>
    <property type="match status" value="1"/>
</dbReference>
<dbReference type="HAMAP" id="MF_01394">
    <property type="entry name" value="NDH1_NuoA"/>
    <property type="match status" value="1"/>
</dbReference>
<dbReference type="InterPro" id="IPR023043">
    <property type="entry name" value="NAD(P)H_OxRDtase_bac/plastid"/>
</dbReference>
<dbReference type="InterPro" id="IPR000440">
    <property type="entry name" value="NADH_UbQ/plastoQ_OxRdtase_su3"/>
</dbReference>
<dbReference type="InterPro" id="IPR038430">
    <property type="entry name" value="NDAH_ubi_oxred_su3_sf"/>
</dbReference>
<dbReference type="PANTHER" id="PTHR11058">
    <property type="entry name" value="NADH-UBIQUINONE OXIDOREDUCTASE CHAIN 3"/>
    <property type="match status" value="1"/>
</dbReference>
<dbReference type="PANTHER" id="PTHR11058:SF9">
    <property type="entry name" value="NADH-UBIQUINONE OXIDOREDUCTASE CHAIN 3"/>
    <property type="match status" value="1"/>
</dbReference>
<dbReference type="Pfam" id="PF00507">
    <property type="entry name" value="Oxidored_q4"/>
    <property type="match status" value="1"/>
</dbReference>
<comment type="function">
    <text evidence="1">NDH shuttles electrons from NAD(P)H:plastoquinone, via FMN and iron-sulfur (Fe-S) centers, to quinones in the photosynthetic chain and possibly in a chloroplast respiratory chain. The immediate electron acceptor for the enzyme in this species is believed to be plastoquinone. Couples the redox reaction to proton translocation, and thus conserves the redox energy in a proton gradient.</text>
</comment>
<comment type="catalytic activity">
    <reaction evidence="1">
        <text>a plastoquinone + NADH + (n+1) H(+)(in) = a plastoquinol + NAD(+) + n H(+)(out)</text>
        <dbReference type="Rhea" id="RHEA:42608"/>
        <dbReference type="Rhea" id="RHEA-COMP:9561"/>
        <dbReference type="Rhea" id="RHEA-COMP:9562"/>
        <dbReference type="ChEBI" id="CHEBI:15378"/>
        <dbReference type="ChEBI" id="CHEBI:17757"/>
        <dbReference type="ChEBI" id="CHEBI:57540"/>
        <dbReference type="ChEBI" id="CHEBI:57945"/>
        <dbReference type="ChEBI" id="CHEBI:62192"/>
    </reaction>
</comment>
<comment type="catalytic activity">
    <reaction evidence="1">
        <text>a plastoquinone + NADPH + (n+1) H(+)(in) = a plastoquinol + NADP(+) + n H(+)(out)</text>
        <dbReference type="Rhea" id="RHEA:42612"/>
        <dbReference type="Rhea" id="RHEA-COMP:9561"/>
        <dbReference type="Rhea" id="RHEA-COMP:9562"/>
        <dbReference type="ChEBI" id="CHEBI:15378"/>
        <dbReference type="ChEBI" id="CHEBI:17757"/>
        <dbReference type="ChEBI" id="CHEBI:57783"/>
        <dbReference type="ChEBI" id="CHEBI:58349"/>
        <dbReference type="ChEBI" id="CHEBI:62192"/>
    </reaction>
</comment>
<comment type="subunit">
    <text evidence="1">NDH is composed of at least 16 different subunits, 5 of which are encoded in the nucleus.</text>
</comment>
<comment type="subcellular location">
    <subcellularLocation>
        <location evidence="1">Plastid</location>
        <location evidence="1">Chloroplast thylakoid membrane</location>
        <topology evidence="1">Multi-pass membrane protein</topology>
    </subcellularLocation>
</comment>
<comment type="similarity">
    <text evidence="1">Belongs to the complex I subunit 3 family.</text>
</comment>
<protein>
    <recommendedName>
        <fullName evidence="1">NAD(P)H-quinone oxidoreductase subunit 3, chloroplastic</fullName>
        <ecNumber evidence="1">7.1.1.-</ecNumber>
    </recommendedName>
    <alternativeName>
        <fullName evidence="1">NAD(P)H dehydrogenase subunit 3</fullName>
    </alternativeName>
    <alternativeName>
        <fullName evidence="1">NADH-plastoquinone oxidoreductase subunit 3</fullName>
    </alternativeName>
</protein>
<gene>
    <name evidence="1" type="primary">ndhC</name>
</gene>
<sequence>MFLLYKYDIFWAFLIISSVIPILAFLISAVLAPINKGPEKLSSYESGIEPMGDAWLQFRIRYYMFALVFVVFDVETVFLYPWAMSFDVLGVPVFIEAFIFMLILIVGLVYAWRKGALEWS</sequence>
<evidence type="ECO:0000255" key="1">
    <source>
        <dbReference type="HAMAP-Rule" id="MF_01394"/>
    </source>
</evidence>
<proteinExistence type="inferred from homology"/>
<name>NU3C_CITSI</name>
<keyword id="KW-0150">Chloroplast</keyword>
<keyword id="KW-0472">Membrane</keyword>
<keyword id="KW-0520">NAD</keyword>
<keyword id="KW-0521">NADP</keyword>
<keyword id="KW-0934">Plastid</keyword>
<keyword id="KW-0618">Plastoquinone</keyword>
<keyword id="KW-0874">Quinone</keyword>
<keyword id="KW-0793">Thylakoid</keyword>
<keyword id="KW-1278">Translocase</keyword>
<keyword id="KW-0812">Transmembrane</keyword>
<keyword id="KW-1133">Transmembrane helix</keyword>
<keyword id="KW-0813">Transport</keyword>
<reference key="1">
    <citation type="journal article" date="2006" name="BMC Plant Biol.">
        <title>The complete chloroplast genome sequence of Citrus sinensis (L.) Osbeck var 'Ridge Pineapple': organization and phylogenetic relationships to other angiosperms.</title>
        <authorList>
            <person name="Bausher M.G."/>
            <person name="Singh N.D."/>
            <person name="Lee S.-B."/>
            <person name="Jansen R.K."/>
            <person name="Daniell H."/>
        </authorList>
    </citation>
    <scope>NUCLEOTIDE SEQUENCE [LARGE SCALE GENOMIC DNA]</scope>
    <source>
        <strain>cv. Osbeck var. Ridge Pineapple</strain>
    </source>
</reference>
<feature type="chain" id="PRO_0000362822" description="NAD(P)H-quinone oxidoreductase subunit 3, chloroplastic">
    <location>
        <begin position="1"/>
        <end position="120"/>
    </location>
</feature>
<feature type="transmembrane region" description="Helical" evidence="1">
    <location>
        <begin position="9"/>
        <end position="29"/>
    </location>
</feature>
<feature type="transmembrane region" description="Helical" evidence="1">
    <location>
        <begin position="64"/>
        <end position="84"/>
    </location>
</feature>
<feature type="transmembrane region" description="Helical" evidence="1">
    <location>
        <begin position="88"/>
        <end position="108"/>
    </location>
</feature>